<keyword id="KW-0028">Amino-acid biosynthesis</keyword>
<keyword id="KW-0032">Aminotransferase</keyword>
<keyword id="KW-0963">Cytoplasm</keyword>
<keyword id="KW-0663">Pyridoxal phosphate</keyword>
<keyword id="KW-0664">Pyridoxine biosynthesis</keyword>
<keyword id="KW-0718">Serine biosynthesis</keyword>
<keyword id="KW-0808">Transferase</keyword>
<protein>
    <recommendedName>
        <fullName evidence="1">Phosphoserine aminotransferase</fullName>
        <ecNumber evidence="1">2.6.1.52</ecNumber>
    </recommendedName>
    <alternativeName>
        <fullName evidence="1">Phosphohydroxythreonine aminotransferase</fullName>
        <shortName evidence="1">PSAT</shortName>
    </alternativeName>
</protein>
<proteinExistence type="inferred from homology"/>
<feature type="chain" id="PRO_1000076905" description="Phosphoserine aminotransferase">
    <location>
        <begin position="1"/>
        <end position="360"/>
    </location>
</feature>
<feature type="binding site" evidence="1">
    <location>
        <position position="42"/>
    </location>
    <ligand>
        <name>L-glutamate</name>
        <dbReference type="ChEBI" id="CHEBI:29985"/>
    </ligand>
</feature>
<feature type="binding site" evidence="1">
    <location>
        <position position="102"/>
    </location>
    <ligand>
        <name>pyridoxal 5'-phosphate</name>
        <dbReference type="ChEBI" id="CHEBI:597326"/>
    </ligand>
</feature>
<feature type="binding site" evidence="1">
    <location>
        <position position="152"/>
    </location>
    <ligand>
        <name>pyridoxal 5'-phosphate</name>
        <dbReference type="ChEBI" id="CHEBI:597326"/>
    </ligand>
</feature>
<feature type="binding site" evidence="1">
    <location>
        <position position="171"/>
    </location>
    <ligand>
        <name>pyridoxal 5'-phosphate</name>
        <dbReference type="ChEBI" id="CHEBI:597326"/>
    </ligand>
</feature>
<feature type="binding site" evidence="1">
    <location>
        <position position="194"/>
    </location>
    <ligand>
        <name>pyridoxal 5'-phosphate</name>
        <dbReference type="ChEBI" id="CHEBI:597326"/>
    </ligand>
</feature>
<feature type="binding site" evidence="1">
    <location>
        <begin position="237"/>
        <end position="238"/>
    </location>
    <ligand>
        <name>pyridoxal 5'-phosphate</name>
        <dbReference type="ChEBI" id="CHEBI:597326"/>
    </ligand>
</feature>
<feature type="modified residue" description="N6-(pyridoxal phosphate)lysine" evidence="1">
    <location>
        <position position="195"/>
    </location>
</feature>
<sequence>MSRVYNFSAGPAAIPEEVLFTVRDELLDWHGIGMSIAEVSHRGEEFIGVAEEAARDLRELLAVPESYHILFLQGGSRLQFDMVPMNLLANHKKAVYIDSGVWSNLAIREAKNYCDPHLATNAKELNYTGIPDQATWDMPNEAAYFYYVDNETVNGIEFPFIPDTDLTLVCDMSSNLLSRPFDVSRYGLIFACAQKNMGLAGLTIVIVHDDLLKRSPLPTTPSYLQYALHAKERSFINTPPTFAWYLAGLIFKWVKNQGGVAVLAERNQRKAAKLYKFIDKSNFFDNPINPTYRSRMNVIFRLADERLNSLFLKEATENGLANLKGHRLLGGMRASIYNAMTEEGVDALINFMGQFEKRHG</sequence>
<reference key="1">
    <citation type="submission" date="2007-11" db="EMBL/GenBank/DDBJ databases">
        <title>Genome sequencing of phylogenetically and phenotypically diverse Coxiella burnetii isolates.</title>
        <authorList>
            <person name="Seshadri R."/>
            <person name="Samuel J.E."/>
        </authorList>
    </citation>
    <scope>NUCLEOTIDE SEQUENCE [LARGE SCALE GENOMIC DNA]</scope>
    <source>
        <strain>RSA 331 / Henzerling II</strain>
    </source>
</reference>
<gene>
    <name evidence="1" type="primary">serC</name>
    <name type="ordered locus">COXBURSA331_A0639</name>
</gene>
<organism>
    <name type="scientific">Coxiella burnetii (strain RSA 331 / Henzerling II)</name>
    <dbReference type="NCBI Taxonomy" id="360115"/>
    <lineage>
        <taxon>Bacteria</taxon>
        <taxon>Pseudomonadati</taxon>
        <taxon>Pseudomonadota</taxon>
        <taxon>Gammaproteobacteria</taxon>
        <taxon>Legionellales</taxon>
        <taxon>Coxiellaceae</taxon>
        <taxon>Coxiella</taxon>
    </lineage>
</organism>
<name>SERC_COXBR</name>
<comment type="function">
    <text evidence="1">Catalyzes the reversible conversion of 3-phosphohydroxypyruvate to phosphoserine and of 3-hydroxy-2-oxo-4-phosphonooxybutanoate to phosphohydroxythreonine.</text>
</comment>
<comment type="catalytic activity">
    <reaction evidence="1">
        <text>O-phospho-L-serine + 2-oxoglutarate = 3-phosphooxypyruvate + L-glutamate</text>
        <dbReference type="Rhea" id="RHEA:14329"/>
        <dbReference type="ChEBI" id="CHEBI:16810"/>
        <dbReference type="ChEBI" id="CHEBI:18110"/>
        <dbReference type="ChEBI" id="CHEBI:29985"/>
        <dbReference type="ChEBI" id="CHEBI:57524"/>
        <dbReference type="EC" id="2.6.1.52"/>
    </reaction>
</comment>
<comment type="catalytic activity">
    <reaction evidence="1">
        <text>4-(phosphooxy)-L-threonine + 2-oxoglutarate = (R)-3-hydroxy-2-oxo-4-phosphooxybutanoate + L-glutamate</text>
        <dbReference type="Rhea" id="RHEA:16573"/>
        <dbReference type="ChEBI" id="CHEBI:16810"/>
        <dbReference type="ChEBI" id="CHEBI:29985"/>
        <dbReference type="ChEBI" id="CHEBI:58452"/>
        <dbReference type="ChEBI" id="CHEBI:58538"/>
        <dbReference type="EC" id="2.6.1.52"/>
    </reaction>
</comment>
<comment type="cofactor">
    <cofactor evidence="1">
        <name>pyridoxal 5'-phosphate</name>
        <dbReference type="ChEBI" id="CHEBI:597326"/>
    </cofactor>
    <text evidence="1">Binds 1 pyridoxal phosphate per subunit.</text>
</comment>
<comment type="pathway">
    <text evidence="1">Amino-acid biosynthesis; L-serine biosynthesis; L-serine from 3-phospho-D-glycerate: step 2/3.</text>
</comment>
<comment type="pathway">
    <text evidence="1">Cofactor biosynthesis; pyridoxine 5'-phosphate biosynthesis; pyridoxine 5'-phosphate from D-erythrose 4-phosphate: step 3/5.</text>
</comment>
<comment type="subunit">
    <text evidence="1">Homodimer.</text>
</comment>
<comment type="subcellular location">
    <subcellularLocation>
        <location evidence="1">Cytoplasm</location>
    </subcellularLocation>
</comment>
<comment type="similarity">
    <text evidence="1">Belongs to the class-V pyridoxal-phosphate-dependent aminotransferase family. SerC subfamily.</text>
</comment>
<dbReference type="EC" id="2.6.1.52" evidence="1"/>
<dbReference type="EMBL" id="CP000890">
    <property type="protein sequence ID" value="ABX78179.1"/>
    <property type="molecule type" value="Genomic_DNA"/>
</dbReference>
<dbReference type="RefSeq" id="WP_012220246.1">
    <property type="nucleotide sequence ID" value="NC_010117.1"/>
</dbReference>
<dbReference type="SMR" id="A9NC17"/>
<dbReference type="KEGG" id="cbs:COXBURSA331_A0639"/>
<dbReference type="HOGENOM" id="CLU_034866_0_2_6"/>
<dbReference type="UniPathway" id="UPA00135">
    <property type="reaction ID" value="UER00197"/>
</dbReference>
<dbReference type="UniPathway" id="UPA00244">
    <property type="reaction ID" value="UER00311"/>
</dbReference>
<dbReference type="GO" id="GO:0005737">
    <property type="term" value="C:cytoplasm"/>
    <property type="evidence" value="ECO:0007669"/>
    <property type="project" value="UniProtKB-SubCell"/>
</dbReference>
<dbReference type="GO" id="GO:0004648">
    <property type="term" value="F:O-phospho-L-serine:2-oxoglutarate aminotransferase activity"/>
    <property type="evidence" value="ECO:0007669"/>
    <property type="project" value="UniProtKB-UniRule"/>
</dbReference>
<dbReference type="GO" id="GO:0030170">
    <property type="term" value="F:pyridoxal phosphate binding"/>
    <property type="evidence" value="ECO:0007669"/>
    <property type="project" value="UniProtKB-UniRule"/>
</dbReference>
<dbReference type="GO" id="GO:0006564">
    <property type="term" value="P:L-serine biosynthetic process"/>
    <property type="evidence" value="ECO:0007669"/>
    <property type="project" value="UniProtKB-UniRule"/>
</dbReference>
<dbReference type="GO" id="GO:0008615">
    <property type="term" value="P:pyridoxine biosynthetic process"/>
    <property type="evidence" value="ECO:0007669"/>
    <property type="project" value="UniProtKB-UniRule"/>
</dbReference>
<dbReference type="FunFam" id="3.40.640.10:FF:000010">
    <property type="entry name" value="Phosphoserine aminotransferase"/>
    <property type="match status" value="1"/>
</dbReference>
<dbReference type="FunFam" id="3.90.1150.10:FF:000006">
    <property type="entry name" value="Phosphoserine aminotransferase"/>
    <property type="match status" value="1"/>
</dbReference>
<dbReference type="Gene3D" id="3.90.1150.10">
    <property type="entry name" value="Aspartate Aminotransferase, domain 1"/>
    <property type="match status" value="1"/>
</dbReference>
<dbReference type="Gene3D" id="3.40.640.10">
    <property type="entry name" value="Type I PLP-dependent aspartate aminotransferase-like (Major domain)"/>
    <property type="match status" value="1"/>
</dbReference>
<dbReference type="HAMAP" id="MF_00160">
    <property type="entry name" value="SerC_aminotrans_5"/>
    <property type="match status" value="1"/>
</dbReference>
<dbReference type="InterPro" id="IPR000192">
    <property type="entry name" value="Aminotrans_V_dom"/>
</dbReference>
<dbReference type="InterPro" id="IPR020578">
    <property type="entry name" value="Aminotrans_V_PyrdxlP_BS"/>
</dbReference>
<dbReference type="InterPro" id="IPR022278">
    <property type="entry name" value="Pser_aminoTfrase"/>
</dbReference>
<dbReference type="InterPro" id="IPR015424">
    <property type="entry name" value="PyrdxlP-dep_Trfase"/>
</dbReference>
<dbReference type="InterPro" id="IPR015421">
    <property type="entry name" value="PyrdxlP-dep_Trfase_major"/>
</dbReference>
<dbReference type="InterPro" id="IPR015422">
    <property type="entry name" value="PyrdxlP-dep_Trfase_small"/>
</dbReference>
<dbReference type="NCBIfam" id="NF003764">
    <property type="entry name" value="PRK05355.1"/>
    <property type="match status" value="1"/>
</dbReference>
<dbReference type="NCBIfam" id="TIGR01364">
    <property type="entry name" value="serC_1"/>
    <property type="match status" value="1"/>
</dbReference>
<dbReference type="PANTHER" id="PTHR43247">
    <property type="entry name" value="PHOSPHOSERINE AMINOTRANSFERASE"/>
    <property type="match status" value="1"/>
</dbReference>
<dbReference type="PANTHER" id="PTHR43247:SF1">
    <property type="entry name" value="PHOSPHOSERINE AMINOTRANSFERASE"/>
    <property type="match status" value="1"/>
</dbReference>
<dbReference type="Pfam" id="PF00266">
    <property type="entry name" value="Aminotran_5"/>
    <property type="match status" value="1"/>
</dbReference>
<dbReference type="PIRSF" id="PIRSF000525">
    <property type="entry name" value="SerC"/>
    <property type="match status" value="1"/>
</dbReference>
<dbReference type="SUPFAM" id="SSF53383">
    <property type="entry name" value="PLP-dependent transferases"/>
    <property type="match status" value="1"/>
</dbReference>
<dbReference type="PROSITE" id="PS00595">
    <property type="entry name" value="AA_TRANSFER_CLASS_5"/>
    <property type="match status" value="1"/>
</dbReference>
<evidence type="ECO:0000255" key="1">
    <source>
        <dbReference type="HAMAP-Rule" id="MF_00160"/>
    </source>
</evidence>
<accession>A9NC17</accession>